<keyword id="KW-0217">Developmental protein</keyword>
<keyword id="KW-0221">Differentiation</keyword>
<keyword id="KW-0238">DNA-binding</keyword>
<keyword id="KW-0287">Flowering</keyword>
<keyword id="KW-0371">Homeobox</keyword>
<keyword id="KW-0539">Nucleus</keyword>
<keyword id="KW-1185">Reference proteome</keyword>
<keyword id="KW-0677">Repeat</keyword>
<sequence length="953" mass="105415">MDAFKEEIEIGSSVESLMELLDSQKVLFHSQIDQLQDVVVAQCKLTGVNPLAQEMAAGALSIKIGKRPRDLLNPKAVKYLQAVFAIKDAISKRESREISALFGITVAQVREFFVTQKTRVRKQVRLSREKVVMSNTHALQDDGVPENNNATNHVEPVPLNSIHPEACSISWGEGETVALIPPEDIPPDISDSDKYFVENIFSLLRKEETFSGQVKLMEWIMQIQDASVLIWFLSKGGVLILTTWLSQAASEEQTSVLLLILKVLCHLPLHKASPENMSAILQSVNGLRFYRISDISNRAKGLLSRWTKLFAKIQAMKKQNRNSSQIDSQSQLLLKQSIAEIMGDSSNPEDILSLSNGKSENVRRIESSQGPKLLLTSADDSTKKHMLGSNPSYNKERRKVQMVEQPGQKAAGKSPQTVRIGTSGRSRPMSADDIQKAKMRALYMQSKNSKKDPLPSAIGDSKIVAPEKPLALHSAKDSPPIQNNEAKTEDTPVLSTVQPVNGFSTIQPVNGPSAVQPVNGPLAVQPVNGPSALQPVNGPSAVIVPVQADEIKKPSTPPKSISSKVGVMMKMSSQTILKNCKRKQIDWHVPPGMELDELWRVAAGGNSKEADVQRNRNRRERETTYQSLQTIPLNPKEPWDREMDYDDSLTPEIPSQQPPEESLTEPQDSLDERRIAAGAATTSSSLSSPEPDLELLAALLKNPDLVYALTSGKPSNLAGQDMVKLLDVIKTGAPNSSSSSNKQVEERVEVSLPSPTPSTNPGMSGWGQEGIRNPFSRQNQVGTAVARSGTQLRVGSMQWHQTNEQSIPRHAPSAYSNSITLAHTEREQQQYMQPKLHHNLHFQQQQQQPISTTSYAVREPVGQMGTGTSSSWRSQQSQNSYYSHQENEIASASQVTSYQGNSQYMSSNPGYESWSPDNSPSRNQLNMRGQQQQASRKHDSSTHPYWNQNKRWR</sequence>
<gene>
    <name type="primary">LD</name>
    <name type="ordered locus">At4g02560</name>
    <name type="ORF">T10P11.15</name>
</gene>
<evidence type="ECO:0000255" key="1">
    <source>
        <dbReference type="PROSITE-ProRule" id="PRU00108"/>
    </source>
</evidence>
<evidence type="ECO:0000256" key="2">
    <source>
        <dbReference type="SAM" id="MobiDB-lite"/>
    </source>
</evidence>
<evidence type="ECO:0000269" key="3">
    <source>
    </source>
</evidence>
<evidence type="ECO:0000269" key="4">
    <source>
    </source>
</evidence>
<evidence type="ECO:0000269" key="5">
    <source>
    </source>
</evidence>
<evidence type="ECO:0000305" key="6"/>
<organism>
    <name type="scientific">Arabidopsis thaliana</name>
    <name type="common">Mouse-ear cress</name>
    <dbReference type="NCBI Taxonomy" id="3702"/>
    <lineage>
        <taxon>Eukaryota</taxon>
        <taxon>Viridiplantae</taxon>
        <taxon>Streptophyta</taxon>
        <taxon>Embryophyta</taxon>
        <taxon>Tracheophyta</taxon>
        <taxon>Spermatophyta</taxon>
        <taxon>Magnoliopsida</taxon>
        <taxon>eudicotyledons</taxon>
        <taxon>Gunneridae</taxon>
        <taxon>Pentapetalae</taxon>
        <taxon>rosids</taxon>
        <taxon>malvids</taxon>
        <taxon>Brassicales</taxon>
        <taxon>Brassicaceae</taxon>
        <taxon>Camelineae</taxon>
        <taxon>Arabidopsis</taxon>
    </lineage>
</organism>
<accession>Q38796</accession>
<accession>O22771</accession>
<accession>Q0KG59</accession>
<accession>Q0KG64</accession>
<accession>Q0KG74</accession>
<accession>Q0KG76</accession>
<accession>Q0KG77</accession>
<accession>Q0KG78</accession>
<accession>Q0KG89</accession>
<accession>Q0KG90</accession>
<accession>Q0KG91</accession>
<accession>Q0KG92</accession>
<accession>Q0KG93</accession>
<accession>Q0KG94</accession>
<accession>Q0KG97</accession>
<accession>Q0WVK1</accession>
<accession>Q58T20</accession>
<accession>Q9C5Z9</accession>
<comment type="function">
    <text evidence="3">Seems to play a role in the regulation of flowering time in the autonomous flowering pathway by repressing FLOWERING LOCUS C expression.</text>
</comment>
<comment type="subunit">
    <text evidence="4">Interacts with SUF4.</text>
</comment>
<comment type="interaction">
    <interactant intactId="EBI-2126221">
        <id>Q38796</id>
    </interactant>
    <interactant intactId="EBI-2126140">
        <id>Q9C5G0</id>
        <label>SUF4</label>
    </interactant>
    <organismsDiffer>false</organismsDiffer>
    <experiments>3</experiments>
</comment>
<comment type="subcellular location">
    <subcellularLocation>
        <location>Nucleus</location>
    </subcellularLocation>
</comment>
<comment type="tissue specificity">
    <text>Expressed in shoot apex, root apex, leaf primordia and floral buds.</text>
</comment>
<comment type="developmental stage">
    <text>Accumulates prior to flowering in the vegetative shoot apical meristem and after flowering in floral meristems.</text>
</comment>
<comment type="disruption phenotype">
    <text evidence="5">Plants show late flowering phenotype (mutants LD-1 and LD-3).</text>
</comment>
<reference key="1">
    <citation type="journal article" date="1994" name="Plant Cell">
        <title>Isolation of LUMINIDEPENDENS: a gene involved in the control of flowering time in Arabidopsis.</title>
        <authorList>
            <person name="Lee I."/>
            <person name="Aukerman M.J."/>
            <person name="Gore S.L."/>
            <person name="Lohman K.N."/>
            <person name="Michaels S.D."/>
            <person name="Weaver L.M."/>
            <person name="John M.C."/>
            <person name="Feldmann K.A."/>
            <person name="Amasino R.M."/>
        </authorList>
    </citation>
    <scope>NUCLEOTIDE SEQUENCE [MRNA]</scope>
    <scope>DISRUPTION PHENOTYPE</scope>
    <source>
        <strain>cv. Wassilewskija</strain>
    </source>
</reference>
<reference key="2">
    <citation type="journal article" date="2005" name="Genetics">
        <title>FRIGIDA-independent variation in flowering time of natural Arabidopsis thaliana accessions.</title>
        <authorList>
            <person name="Werner J.D."/>
            <person name="Borevitz J.O."/>
            <person name="Uhlenhaut N.H."/>
            <person name="Ecker J.R."/>
            <person name="Chory J."/>
            <person name="Weigel D."/>
        </authorList>
    </citation>
    <scope>NUCLEOTIDE SEQUENCE [GENOMIC DNA]</scope>
    <source>
        <strain>cv. Lz-0</strain>
    </source>
</reference>
<reference key="3">
    <citation type="submission" date="2005-12" db="EMBL/GenBank/DDBJ databases">
        <title>Sequence variation at the luminidependens gene of Arabidopsis thaliana and association with flowering time.</title>
        <authorList>
            <person name="Roux F."/>
            <person name="Camilleri C."/>
            <person name="Durand S."/>
            <person name="Le Corre V."/>
        </authorList>
    </citation>
    <scope>NUCLEOTIDE SEQUENCE [GENOMIC DNA]</scope>
    <scope>VARIANTS</scope>
    <source>
        <strain>cv. Akita</strain>
        <strain>cv. Alc-0</strain>
        <strain>cv. All1-1</strain>
        <strain>cv. All2-2</strain>
        <strain>cv. Blh-1</strain>
        <strain>cv. Bui</strain>
        <strain>cv. Bur-0</strain>
        <strain>cv. Cla-1</strain>
        <strain>cv. Cle-1</strain>
        <strain>cv. Cro-1</strain>
        <strain>cv. Ct-1</strain>
        <strain>cv. Cvi-0</strain>
        <strain>cv. Cyr</strain>
        <strain>cv. Dam1</strain>
        <strain>cv. Dam2</strain>
        <strain>cv. Edi-0</strain>
        <strain>cv. Ge-0</strain>
        <strain>cv. Gre-0</strain>
        <strain>cv. Ita-0</strain>
        <strain>cv. Jea</strain>
        <strain>cv. Kn-0</strain>
        <strain>cv. Lac-1</strain>
        <strain>cv. Mar-2</strain>
        <strain>cv. Mar1-2</strain>
        <strain>cv. Mh-1</strain>
        <strain>cv. Mol-1</strain>
        <strain>cv. Mt-0</strain>
        <strain>cv. N13 Konchezero</strain>
        <strain>cv. Nog</strain>
        <strain>cv. Oy-0</strain>
        <strain>cv. Par-2</strain>
        <strain>cv. Pon</strain>
        <strain>cv. Pyl-1</strain>
        <strain>cv. Ran</strain>
        <strain>cv. Rom-1</strain>
        <strain>cv. Sakata</strain>
        <strain>cv. Sha</strain>
        <strain>cv. St-0</strain>
        <strain>cv. Stw-0</strain>
        <strain>cv. Tsu-0</strain>
        <strain>cv. Vou-3</strain>
        <strain>cv. Wha1</strain>
        <strain>cv. Wha2</strain>
    </source>
</reference>
<reference key="4">
    <citation type="journal article" date="1999" name="Nature">
        <title>Sequence and analysis of chromosome 4 of the plant Arabidopsis thaliana.</title>
        <authorList>
            <person name="Mayer K.F.X."/>
            <person name="Schueller C."/>
            <person name="Wambutt R."/>
            <person name="Murphy G."/>
            <person name="Volckaert G."/>
            <person name="Pohl T."/>
            <person name="Duesterhoeft A."/>
            <person name="Stiekema W."/>
            <person name="Entian K.-D."/>
            <person name="Terryn N."/>
            <person name="Harris B."/>
            <person name="Ansorge W."/>
            <person name="Brandt P."/>
            <person name="Grivell L.A."/>
            <person name="Rieger M."/>
            <person name="Weichselgartner M."/>
            <person name="de Simone V."/>
            <person name="Obermaier B."/>
            <person name="Mache R."/>
            <person name="Mueller M."/>
            <person name="Kreis M."/>
            <person name="Delseny M."/>
            <person name="Puigdomenech P."/>
            <person name="Watson M."/>
            <person name="Schmidtheini T."/>
            <person name="Reichert B."/>
            <person name="Portetelle D."/>
            <person name="Perez-Alonso M."/>
            <person name="Boutry M."/>
            <person name="Bancroft I."/>
            <person name="Vos P."/>
            <person name="Hoheisel J."/>
            <person name="Zimmermann W."/>
            <person name="Wedler H."/>
            <person name="Ridley P."/>
            <person name="Langham S.-A."/>
            <person name="McCullagh B."/>
            <person name="Bilham L."/>
            <person name="Robben J."/>
            <person name="van der Schueren J."/>
            <person name="Grymonprez B."/>
            <person name="Chuang Y.-J."/>
            <person name="Vandenbussche F."/>
            <person name="Braeken M."/>
            <person name="Weltjens I."/>
            <person name="Voet M."/>
            <person name="Bastiaens I."/>
            <person name="Aert R."/>
            <person name="Defoor E."/>
            <person name="Weitzenegger T."/>
            <person name="Bothe G."/>
            <person name="Ramsperger U."/>
            <person name="Hilbert H."/>
            <person name="Braun M."/>
            <person name="Holzer E."/>
            <person name="Brandt A."/>
            <person name="Peters S."/>
            <person name="van Staveren M."/>
            <person name="Dirkse W."/>
            <person name="Mooijman P."/>
            <person name="Klein Lankhorst R."/>
            <person name="Rose M."/>
            <person name="Hauf J."/>
            <person name="Koetter P."/>
            <person name="Berneiser S."/>
            <person name="Hempel S."/>
            <person name="Feldpausch M."/>
            <person name="Lamberth S."/>
            <person name="Van den Daele H."/>
            <person name="De Keyser A."/>
            <person name="Buysshaert C."/>
            <person name="Gielen J."/>
            <person name="Villarroel R."/>
            <person name="De Clercq R."/>
            <person name="van Montagu M."/>
            <person name="Rogers J."/>
            <person name="Cronin A."/>
            <person name="Quail M.A."/>
            <person name="Bray-Allen S."/>
            <person name="Clark L."/>
            <person name="Doggett J."/>
            <person name="Hall S."/>
            <person name="Kay M."/>
            <person name="Lennard N."/>
            <person name="McLay K."/>
            <person name="Mayes R."/>
            <person name="Pettett A."/>
            <person name="Rajandream M.A."/>
            <person name="Lyne M."/>
            <person name="Benes V."/>
            <person name="Rechmann S."/>
            <person name="Borkova D."/>
            <person name="Bloecker H."/>
            <person name="Scharfe M."/>
            <person name="Grimm M."/>
            <person name="Loehnert T.-H."/>
            <person name="Dose S."/>
            <person name="de Haan M."/>
            <person name="Maarse A.C."/>
            <person name="Schaefer M."/>
            <person name="Mueller-Auer S."/>
            <person name="Gabel C."/>
            <person name="Fuchs M."/>
            <person name="Fartmann B."/>
            <person name="Granderath K."/>
            <person name="Dauner D."/>
            <person name="Herzl A."/>
            <person name="Neumann S."/>
            <person name="Argiriou A."/>
            <person name="Vitale D."/>
            <person name="Liguori R."/>
            <person name="Piravandi E."/>
            <person name="Massenet O."/>
            <person name="Quigley F."/>
            <person name="Clabauld G."/>
            <person name="Muendlein A."/>
            <person name="Felber R."/>
            <person name="Schnabl S."/>
            <person name="Hiller R."/>
            <person name="Schmidt W."/>
            <person name="Lecharny A."/>
            <person name="Aubourg S."/>
            <person name="Chefdor F."/>
            <person name="Cooke R."/>
            <person name="Berger C."/>
            <person name="Monfort A."/>
            <person name="Casacuberta E."/>
            <person name="Gibbons T."/>
            <person name="Weber N."/>
            <person name="Vandenbol M."/>
            <person name="Bargues M."/>
            <person name="Terol J."/>
            <person name="Torres A."/>
            <person name="Perez-Perez A."/>
            <person name="Purnelle B."/>
            <person name="Bent E."/>
            <person name="Johnson S."/>
            <person name="Tacon D."/>
            <person name="Jesse T."/>
            <person name="Heijnen L."/>
            <person name="Schwarz S."/>
            <person name="Scholler P."/>
            <person name="Heber S."/>
            <person name="Francs P."/>
            <person name="Bielke C."/>
            <person name="Frishman D."/>
            <person name="Haase D."/>
            <person name="Lemcke K."/>
            <person name="Mewes H.-W."/>
            <person name="Stocker S."/>
            <person name="Zaccaria P."/>
            <person name="Bevan M."/>
            <person name="Wilson R.K."/>
            <person name="de la Bastide M."/>
            <person name="Habermann K."/>
            <person name="Parnell L."/>
            <person name="Dedhia N."/>
            <person name="Gnoj L."/>
            <person name="Schutz K."/>
            <person name="Huang E."/>
            <person name="Spiegel L."/>
            <person name="Sekhon M."/>
            <person name="Murray J."/>
            <person name="Sheet P."/>
            <person name="Cordes M."/>
            <person name="Abu-Threideh J."/>
            <person name="Stoneking T."/>
            <person name="Kalicki J."/>
            <person name="Graves T."/>
            <person name="Harmon G."/>
            <person name="Edwards J."/>
            <person name="Latreille P."/>
            <person name="Courtney L."/>
            <person name="Cloud J."/>
            <person name="Abbott A."/>
            <person name="Scott K."/>
            <person name="Johnson D."/>
            <person name="Minx P."/>
            <person name="Bentley D."/>
            <person name="Fulton B."/>
            <person name="Miller N."/>
            <person name="Greco T."/>
            <person name="Kemp K."/>
            <person name="Kramer J."/>
            <person name="Fulton L."/>
            <person name="Mardis E."/>
            <person name="Dante M."/>
            <person name="Pepin K."/>
            <person name="Hillier L.W."/>
            <person name="Nelson J."/>
            <person name="Spieth J."/>
            <person name="Ryan E."/>
            <person name="Andrews S."/>
            <person name="Geisel C."/>
            <person name="Layman D."/>
            <person name="Du H."/>
            <person name="Ali J."/>
            <person name="Berghoff A."/>
            <person name="Jones K."/>
            <person name="Drone K."/>
            <person name="Cotton M."/>
            <person name="Joshu C."/>
            <person name="Antonoiu B."/>
            <person name="Zidanic M."/>
            <person name="Strong C."/>
            <person name="Sun H."/>
            <person name="Lamar B."/>
            <person name="Yordan C."/>
            <person name="Ma P."/>
            <person name="Zhong J."/>
            <person name="Preston R."/>
            <person name="Vil D."/>
            <person name="Shekher M."/>
            <person name="Matero A."/>
            <person name="Shah R."/>
            <person name="Swaby I.K."/>
            <person name="O'Shaughnessy A."/>
            <person name="Rodriguez M."/>
            <person name="Hoffman J."/>
            <person name="Till S."/>
            <person name="Granat S."/>
            <person name="Shohdy N."/>
            <person name="Hasegawa A."/>
            <person name="Hameed A."/>
            <person name="Lodhi M."/>
            <person name="Johnson A."/>
            <person name="Chen E."/>
            <person name="Marra M.A."/>
            <person name="Martienssen R."/>
            <person name="McCombie W.R."/>
        </authorList>
    </citation>
    <scope>NUCLEOTIDE SEQUENCE [LARGE SCALE GENOMIC DNA]</scope>
    <source>
        <strain>cv. Columbia</strain>
    </source>
</reference>
<reference key="5">
    <citation type="journal article" date="2017" name="Plant J.">
        <title>Araport11: a complete reannotation of the Arabidopsis thaliana reference genome.</title>
        <authorList>
            <person name="Cheng C.Y."/>
            <person name="Krishnakumar V."/>
            <person name="Chan A.P."/>
            <person name="Thibaud-Nissen F."/>
            <person name="Schobel S."/>
            <person name="Town C.D."/>
        </authorList>
    </citation>
    <scope>GENOME REANNOTATION</scope>
    <source>
        <strain>cv. Columbia</strain>
    </source>
</reference>
<reference key="6">
    <citation type="submission" date="2006-07" db="EMBL/GenBank/DDBJ databases">
        <title>Large-scale analysis of RIKEN Arabidopsis full-length (RAFL) cDNAs.</title>
        <authorList>
            <person name="Totoki Y."/>
            <person name="Seki M."/>
            <person name="Ishida J."/>
            <person name="Nakajima M."/>
            <person name="Enju A."/>
            <person name="Kamiya A."/>
            <person name="Narusaka M."/>
            <person name="Shin-i T."/>
            <person name="Nakagawa M."/>
            <person name="Sakamoto N."/>
            <person name="Oishi K."/>
            <person name="Kohara Y."/>
            <person name="Kobayashi M."/>
            <person name="Toyoda A."/>
            <person name="Sakaki Y."/>
            <person name="Sakurai T."/>
            <person name="Iida K."/>
            <person name="Akiyama K."/>
            <person name="Satou M."/>
            <person name="Toyoda T."/>
            <person name="Konagaya A."/>
            <person name="Carninci P."/>
            <person name="Kawai J."/>
            <person name="Hayashizaki Y."/>
            <person name="Shinozaki K."/>
        </authorList>
    </citation>
    <scope>NUCLEOTIDE SEQUENCE [LARGE SCALE MRNA]</scope>
    <source>
        <strain>cv. Columbia</strain>
    </source>
</reference>
<reference key="7">
    <citation type="submission" date="2000-01" db="EMBL/GenBank/DDBJ databases">
        <title>Amplified consensus gene markers: tools designing for a genetic map of Arabidopsis-known-function genes in Brassica.</title>
        <authorList>
            <person name="Fourmann M."/>
            <person name="Froger N."/>
            <person name="Brunel D."/>
        </authorList>
    </citation>
    <scope>NUCLEOTIDE SEQUENCE [GENOMIC DNA] OF 294-392</scope>
    <source>
        <strain>cv. Columbia</strain>
    </source>
</reference>
<reference key="8">
    <citation type="journal article" date="1999" name="Plant J.">
        <title>The Arabidopsis flowering-time gene LUMINIDEPENDENS is expressed primarily in regions of cell proliferation and encodes a nuclear protein that regulates LEAFY expression.</title>
        <authorList>
            <person name="Aukerman M.J."/>
            <person name="Lee I."/>
            <person name="Weigel D."/>
            <person name="Amasino R.M."/>
        </authorList>
    </citation>
    <scope>FUNCTION</scope>
</reference>
<reference key="9">
    <citation type="journal article" date="2006" name="Plant Cell">
        <title>SUPPRESSOR OF FRIGIDA4, encoding a C2H2-Type zinc finger protein, represses flowering by transcriptional activation of Arabidopsis FLOWERING LOCUS C.</title>
        <authorList>
            <person name="Kim S."/>
            <person name="Choi K."/>
            <person name="Park C."/>
            <person name="Hwang H.J."/>
            <person name="Lee I."/>
        </authorList>
    </citation>
    <scope>INTERACTION WITH SUF4</scope>
</reference>
<protein>
    <recommendedName>
        <fullName>Homeobox protein LUMINIDEPENDENS</fullName>
    </recommendedName>
</protein>
<proteinExistence type="evidence at protein level"/>
<feature type="chain" id="PRO_0000049169" description="Homeobox protein LUMINIDEPENDENS">
    <location>
        <begin position="1"/>
        <end position="953"/>
    </location>
</feature>
<feature type="repeat" description="1">
    <location>
        <begin position="498"/>
        <end position="502"/>
    </location>
</feature>
<feature type="repeat" description="2">
    <location>
        <begin position="507"/>
        <end position="511"/>
    </location>
</feature>
<feature type="repeat" description="3">
    <location>
        <begin position="516"/>
        <end position="520"/>
    </location>
</feature>
<feature type="repeat" description="4">
    <location>
        <begin position="525"/>
        <end position="529"/>
    </location>
</feature>
<feature type="repeat" description="5">
    <location>
        <begin position="534"/>
        <end position="538"/>
    </location>
</feature>
<feature type="DNA-binding region" description="Homeobox" evidence="1">
    <location>
        <begin position="63"/>
        <end position="123"/>
    </location>
</feature>
<feature type="region of interest" description="Disordered" evidence="2">
    <location>
        <begin position="404"/>
        <end position="430"/>
    </location>
</feature>
<feature type="region of interest" description="5 X 5 AA repeats of Q-P-V-N-G">
    <location>
        <begin position="498"/>
        <end position="538"/>
    </location>
</feature>
<feature type="region of interest" description="Disordered" evidence="2">
    <location>
        <begin position="606"/>
        <end position="668"/>
    </location>
</feature>
<feature type="region of interest" description="Disordered" evidence="2">
    <location>
        <begin position="733"/>
        <end position="763"/>
    </location>
</feature>
<feature type="region of interest" description="Disordered" evidence="2">
    <location>
        <begin position="861"/>
        <end position="953"/>
    </location>
</feature>
<feature type="compositionally biased region" description="Polar residues" evidence="2">
    <location>
        <begin position="414"/>
        <end position="425"/>
    </location>
</feature>
<feature type="compositionally biased region" description="Basic and acidic residues" evidence="2">
    <location>
        <begin position="608"/>
        <end position="623"/>
    </location>
</feature>
<feature type="compositionally biased region" description="Low complexity" evidence="2">
    <location>
        <begin position="651"/>
        <end position="661"/>
    </location>
</feature>
<feature type="compositionally biased region" description="Polar residues" evidence="2">
    <location>
        <begin position="733"/>
        <end position="742"/>
    </location>
</feature>
<feature type="compositionally biased region" description="Low complexity" evidence="2">
    <location>
        <begin position="869"/>
        <end position="884"/>
    </location>
</feature>
<feature type="compositionally biased region" description="Polar residues" evidence="2">
    <location>
        <begin position="888"/>
        <end position="934"/>
    </location>
</feature>
<feature type="compositionally biased region" description="Polar residues" evidence="2">
    <location>
        <begin position="942"/>
        <end position="953"/>
    </location>
</feature>
<feature type="sequence variant" description="In strain: cv. Alc-0.">
    <original>T</original>
    <variation>S</variation>
    <location>
        <position position="151"/>
    </location>
</feature>
<feature type="sequence variant" description="In strain: cv. Ita-0.">
    <original>S</original>
    <variation>C</variation>
    <location>
        <position position="170"/>
    </location>
</feature>
<feature type="sequence variant" description="In strain: cv. Cle-1, cv. Cyr, cv. Ge-0, cv. Jea, cv. Kn-0, cv. Lz-0, cv. Mar1-2, cv. Mol-1, cv. Par-2, cv. Pon, cv. Rom-1, cv. St-0, cv. Tsu-0, cv. Vou-3, cv. Wha1 and cv. Wha2.">
    <original>Q</original>
    <variation>K</variation>
    <location>
        <position position="329"/>
    </location>
</feature>
<feature type="sequence variant" description="In strain: cv. Mar-2.">
    <original>Q</original>
    <variation>R</variation>
    <location>
        <position position="445"/>
    </location>
</feature>
<feature type="sequence variant" description="In strain: cv. Cvi-0.">
    <original>A</original>
    <variation>C</variation>
    <location>
        <position position="457"/>
    </location>
</feature>
<feature type="sequence variant" description="In strain: cv. Cle-1, cv. Cyr, cv. Ge-0, cv. Jea, cv. Kn-0, cv. Lz-0, cv. Mar1-2, cv. Mol-1, cv. Par-2, cv. Pon, cv. Rom-1, cv. St-0, cv. Tsu-0, cv. Vou-3, cv. Wha1 and cv. Wha2.">
    <original>P</original>
    <variation>A</variation>
    <location>
        <position position="479"/>
    </location>
</feature>
<feature type="sequence variant" description="In strain: cv. Cle-1, cv. Cyr, cv. Ge-0, cv. Jea, cv. Kn-0, cv. Lz-0, cv. Mar1-2, cv. Mol-1, cv. Par-2, cv. Pon, cv. Rom-1, cv. St-0, cv. Tsu-0, cv. Vou-3, cv. Wha1 and cv. Wha2.">
    <location>
        <begin position="512"/>
        <end position="520"/>
    </location>
</feature>
<feature type="sequence variant" description="In strain: cv. Bur-0.">
    <original>V</original>
    <variation>G</variation>
    <location>
        <position position="518"/>
    </location>
</feature>
<feature type="sequence variant" description="In strain: cv. Cro-1, cv. Lac-1, cv. Sakata and cv. Sha.">
    <original>V</original>
    <variation>F</variation>
    <location>
        <position position="536"/>
    </location>
</feature>
<feature type="sequence variant" description="In strain: cv. Sakata and cv. Sha.">
    <original>V</original>
    <variation>I</variation>
    <location>
        <position position="542"/>
    </location>
</feature>
<feature type="sequence variant" description="In strain: cv. Akita.">
    <original>R</original>
    <variation>Q</variation>
    <location>
        <position position="618"/>
    </location>
</feature>
<feature type="sequence variant" description="In strain: cv. Lac-1.">
    <original>P</original>
    <variation>L</variation>
    <location>
        <position position="761"/>
    </location>
</feature>
<feature type="sequence variant" description="In strain: cv. Cro-1, cv. Ita-0 and cv. Lac-1.">
    <original>Q</original>
    <variation>QQ</variation>
    <location>
        <position position="848"/>
    </location>
</feature>
<feature type="sequence variant" description="In strain: cv. Blh-1.">
    <original>Q</original>
    <variation>QQQ</variation>
    <location>
        <position position="848"/>
    </location>
</feature>
<feature type="sequence variant" description="In strain: cv. Sakata and cv. Sha.">
    <original>Q</original>
    <variation>QQQQQ</variation>
    <location>
        <position position="848"/>
    </location>
</feature>
<feature type="sequence variant" description="In strain: cv. Alc-0, cv. Cla-1, cv. Lac-1 and cv. Mar-2.">
    <location>
        <begin position="856"/>
        <end position="857"/>
    </location>
</feature>
<feature type="sequence variant" description="In strain: cv. Kn-0, cv. Lz-0, cv. Par-2 and cv. Pon.">
    <original>R</original>
    <variation>S</variation>
    <location>
        <position position="858"/>
    </location>
</feature>
<feature type="sequence variant" description="In strain: cv. Cro-1, cv. Sakata and cv. Sha.">
    <original>S</original>
    <variation>T</variation>
    <location>
        <position position="874"/>
    </location>
</feature>
<feature type="sequence variant" description="In strain: cv. Cro-1.">
    <original>N</original>
    <variation>K</variation>
    <location>
        <position position="879"/>
    </location>
</feature>
<feature type="sequence variant" description="In strain: cv. Lac-1.">
    <original>H</original>
    <variation>R</variation>
    <location>
        <position position="884"/>
    </location>
</feature>
<feature type="sequence variant" description="In strain: cv. Cle-1, cv. Cro-1, cv. Cyr, cv. Ge-0, cv. Ita-0, cv. Jea, cv. Kn-0, cv. Lac-1, cv. Lz-0, cv. Mar1-2, cv. Mol-1, cv. Par-2, cv. Pon, cv. Rom-1, cv. Sakata, cv. Sha, cv. St-0, cv. Tsu-0, cv. Vou-3, cv. Wha1 and cv. Wha2.">
    <original>A</original>
    <variation>G</variation>
    <location>
        <position position="892"/>
    </location>
</feature>
<feature type="sequence variant" description="In strain: cv. St-0 and cv. Tsu-0.">
    <original>N</original>
    <variation>S</variation>
    <location>
        <position position="923"/>
    </location>
</feature>
<feature type="sequence conflict" description="In Ref. 7; AAK00674." evidence="6" ref="7">
    <original>N</original>
    <variation>I</variation>
    <location>
        <position position="320"/>
    </location>
</feature>
<feature type="sequence conflict" description="In Ref. 1." evidence="6" ref="1">
    <original>T</original>
    <variation>S</variation>
    <location>
        <position position="650"/>
    </location>
</feature>
<name>LUMI_ARATH</name>
<dbReference type="EMBL" id="U03456">
    <property type="protein sequence ID" value="AAA19115.1"/>
    <property type="molecule type" value="mRNA"/>
</dbReference>
<dbReference type="EMBL" id="AY849995">
    <property type="protein sequence ID" value="AAX51265.1"/>
    <property type="molecule type" value="Genomic_DNA"/>
</dbReference>
<dbReference type="EMBL" id="AM180092">
    <property type="protein sequence ID" value="CAJ53827.1"/>
    <property type="molecule type" value="Genomic_DNA"/>
</dbReference>
<dbReference type="EMBL" id="AM180093">
    <property type="protein sequence ID" value="CAJ53828.1"/>
    <property type="molecule type" value="Genomic_DNA"/>
</dbReference>
<dbReference type="EMBL" id="AM180094">
    <property type="protein sequence ID" value="CAJ53829.1"/>
    <property type="molecule type" value="Genomic_DNA"/>
</dbReference>
<dbReference type="EMBL" id="AM180095">
    <property type="protein sequence ID" value="CAJ53830.1"/>
    <property type="molecule type" value="Genomic_DNA"/>
</dbReference>
<dbReference type="EMBL" id="AM180096">
    <property type="protein sequence ID" value="CAJ53831.1"/>
    <property type="molecule type" value="Genomic_DNA"/>
</dbReference>
<dbReference type="EMBL" id="AM180097">
    <property type="protein sequence ID" value="CAJ53832.1"/>
    <property type="molecule type" value="Genomic_DNA"/>
</dbReference>
<dbReference type="EMBL" id="AM180098">
    <property type="protein sequence ID" value="CAJ53833.1"/>
    <property type="molecule type" value="Genomic_DNA"/>
</dbReference>
<dbReference type="EMBL" id="AM180099">
    <property type="protein sequence ID" value="CAJ53834.1"/>
    <property type="molecule type" value="Genomic_DNA"/>
</dbReference>
<dbReference type="EMBL" id="AM180100">
    <property type="protein sequence ID" value="CAJ53835.1"/>
    <property type="molecule type" value="Genomic_DNA"/>
</dbReference>
<dbReference type="EMBL" id="AM180101">
    <property type="protein sequence ID" value="CAJ53836.1"/>
    <property type="molecule type" value="Genomic_DNA"/>
</dbReference>
<dbReference type="EMBL" id="AM180102">
    <property type="protein sequence ID" value="CAJ53837.1"/>
    <property type="molecule type" value="Genomic_DNA"/>
</dbReference>
<dbReference type="EMBL" id="AM180103">
    <property type="protein sequence ID" value="CAJ53838.1"/>
    <property type="molecule type" value="Genomic_DNA"/>
</dbReference>
<dbReference type="EMBL" id="AM180104">
    <property type="protein sequence ID" value="CAJ53839.1"/>
    <property type="molecule type" value="Genomic_DNA"/>
</dbReference>
<dbReference type="EMBL" id="AM180105">
    <property type="protein sequence ID" value="CAJ53840.1"/>
    <property type="molecule type" value="Genomic_DNA"/>
</dbReference>
<dbReference type="EMBL" id="AM180106">
    <property type="protein sequence ID" value="CAJ53841.1"/>
    <property type="molecule type" value="Genomic_DNA"/>
</dbReference>
<dbReference type="EMBL" id="AM180107">
    <property type="protein sequence ID" value="CAJ53842.1"/>
    <property type="molecule type" value="Genomic_DNA"/>
</dbReference>
<dbReference type="EMBL" id="AM180108">
    <property type="protein sequence ID" value="CAJ53843.1"/>
    <property type="molecule type" value="Genomic_DNA"/>
</dbReference>
<dbReference type="EMBL" id="AM180109">
    <property type="protein sequence ID" value="CAJ53844.1"/>
    <property type="molecule type" value="Genomic_DNA"/>
</dbReference>
<dbReference type="EMBL" id="AM180110">
    <property type="protein sequence ID" value="CAJ53845.1"/>
    <property type="molecule type" value="Genomic_DNA"/>
</dbReference>
<dbReference type="EMBL" id="AM180111">
    <property type="protein sequence ID" value="CAJ53846.1"/>
    <property type="molecule type" value="Genomic_DNA"/>
</dbReference>
<dbReference type="EMBL" id="AM180112">
    <property type="protein sequence ID" value="CAJ53847.1"/>
    <property type="molecule type" value="Genomic_DNA"/>
</dbReference>
<dbReference type="EMBL" id="AM180113">
    <property type="protein sequence ID" value="CAJ53848.1"/>
    <property type="molecule type" value="Genomic_DNA"/>
</dbReference>
<dbReference type="EMBL" id="AM180114">
    <property type="protein sequence ID" value="CAJ53849.1"/>
    <property type="molecule type" value="Genomic_DNA"/>
</dbReference>
<dbReference type="EMBL" id="AM180115">
    <property type="protein sequence ID" value="CAJ53850.1"/>
    <property type="molecule type" value="Genomic_DNA"/>
</dbReference>
<dbReference type="EMBL" id="AM180116">
    <property type="protein sequence ID" value="CAJ53851.1"/>
    <property type="molecule type" value="Genomic_DNA"/>
</dbReference>
<dbReference type="EMBL" id="AM180117">
    <property type="protein sequence ID" value="CAJ53852.1"/>
    <property type="molecule type" value="Genomic_DNA"/>
</dbReference>
<dbReference type="EMBL" id="AM180118">
    <property type="protein sequence ID" value="CAJ53853.1"/>
    <property type="molecule type" value="Genomic_DNA"/>
</dbReference>
<dbReference type="EMBL" id="AM180119">
    <property type="protein sequence ID" value="CAJ53854.1"/>
    <property type="molecule type" value="Genomic_DNA"/>
</dbReference>
<dbReference type="EMBL" id="AM180120">
    <property type="protein sequence ID" value="CAJ53855.1"/>
    <property type="molecule type" value="Genomic_DNA"/>
</dbReference>
<dbReference type="EMBL" id="AM180121">
    <property type="protein sequence ID" value="CAJ53856.1"/>
    <property type="molecule type" value="Genomic_DNA"/>
</dbReference>
<dbReference type="EMBL" id="AM180122">
    <property type="protein sequence ID" value="CAJ53857.1"/>
    <property type="molecule type" value="Genomic_DNA"/>
</dbReference>
<dbReference type="EMBL" id="AM180123">
    <property type="protein sequence ID" value="CAJ53858.1"/>
    <property type="molecule type" value="Genomic_DNA"/>
</dbReference>
<dbReference type="EMBL" id="AM180124">
    <property type="protein sequence ID" value="CAJ53859.1"/>
    <property type="molecule type" value="Genomic_DNA"/>
</dbReference>
<dbReference type="EMBL" id="AM180125">
    <property type="protein sequence ID" value="CAJ53860.1"/>
    <property type="molecule type" value="Genomic_DNA"/>
</dbReference>
<dbReference type="EMBL" id="AM180126">
    <property type="protein sequence ID" value="CAJ53861.1"/>
    <property type="molecule type" value="Genomic_DNA"/>
</dbReference>
<dbReference type="EMBL" id="AM180127">
    <property type="protein sequence ID" value="CAJ53862.1"/>
    <property type="molecule type" value="Genomic_DNA"/>
</dbReference>
<dbReference type="EMBL" id="AM180128">
    <property type="protein sequence ID" value="CAJ53863.1"/>
    <property type="molecule type" value="Genomic_DNA"/>
</dbReference>
<dbReference type="EMBL" id="AM180129">
    <property type="protein sequence ID" value="CAJ53864.1"/>
    <property type="molecule type" value="Genomic_DNA"/>
</dbReference>
<dbReference type="EMBL" id="AM180130">
    <property type="protein sequence ID" value="CAJ53865.1"/>
    <property type="molecule type" value="Genomic_DNA"/>
</dbReference>
<dbReference type="EMBL" id="AM180131">
    <property type="protein sequence ID" value="CAJ53866.1"/>
    <property type="molecule type" value="Genomic_DNA"/>
</dbReference>
<dbReference type="EMBL" id="AM180132">
    <property type="protein sequence ID" value="CAJ53867.1"/>
    <property type="molecule type" value="Genomic_DNA"/>
</dbReference>
<dbReference type="EMBL" id="AM180133">
    <property type="protein sequence ID" value="CAJ53868.1"/>
    <property type="molecule type" value="Genomic_DNA"/>
</dbReference>
<dbReference type="EMBL" id="AM180134">
    <property type="protein sequence ID" value="CAJ53869.1"/>
    <property type="molecule type" value="Genomic_DNA"/>
</dbReference>
<dbReference type="EMBL" id="AC002330">
    <property type="protein sequence ID" value="AAC78261.1"/>
    <property type="molecule type" value="Genomic_DNA"/>
</dbReference>
<dbReference type="EMBL" id="AL161494">
    <property type="protein sequence ID" value="CAB80749.1"/>
    <property type="molecule type" value="Genomic_DNA"/>
</dbReference>
<dbReference type="EMBL" id="CP002687">
    <property type="protein sequence ID" value="AEE82192.1"/>
    <property type="molecule type" value="Genomic_DNA"/>
</dbReference>
<dbReference type="EMBL" id="CP002687">
    <property type="protein sequence ID" value="AEE82193.1"/>
    <property type="molecule type" value="Genomic_DNA"/>
</dbReference>
<dbReference type="EMBL" id="AK226746">
    <property type="protein sequence ID" value="BAE98847.1"/>
    <property type="molecule type" value="mRNA"/>
</dbReference>
<dbReference type="EMBL" id="AF229402">
    <property type="protein sequence ID" value="AAK00674.1"/>
    <property type="molecule type" value="Genomic_DNA"/>
</dbReference>
<dbReference type="PIR" id="T01093">
    <property type="entry name" value="T01093"/>
</dbReference>
<dbReference type="RefSeq" id="NP_001190660.1">
    <property type="nucleotide sequence ID" value="NM_001203731.2"/>
</dbReference>
<dbReference type="RefSeq" id="NP_192165.1">
    <property type="nucleotide sequence ID" value="NM_116490.4"/>
</dbReference>
<dbReference type="SMR" id="Q38796"/>
<dbReference type="BioGRID" id="13195">
    <property type="interactions" value="7"/>
</dbReference>
<dbReference type="FunCoup" id="Q38796">
    <property type="interactions" value="1890"/>
</dbReference>
<dbReference type="IntAct" id="Q38796">
    <property type="interactions" value="2"/>
</dbReference>
<dbReference type="STRING" id="3702.Q38796"/>
<dbReference type="GlyGen" id="Q38796">
    <property type="glycosylation" value="2 sites, 1 O-linked glycan (1 site)"/>
</dbReference>
<dbReference type="iPTMnet" id="Q38796"/>
<dbReference type="PaxDb" id="3702-AT4G02560.1"/>
<dbReference type="ProteomicsDB" id="238784"/>
<dbReference type="EnsemblPlants" id="AT4G02560.1">
    <property type="protein sequence ID" value="AT4G02560.1"/>
    <property type="gene ID" value="AT4G02560"/>
</dbReference>
<dbReference type="EnsemblPlants" id="AT4G02560.2">
    <property type="protein sequence ID" value="AT4G02560.2"/>
    <property type="gene ID" value="AT4G02560"/>
</dbReference>
<dbReference type="GeneID" id="827904"/>
<dbReference type="Gramene" id="AT4G02560.1">
    <property type="protein sequence ID" value="AT4G02560.1"/>
    <property type="gene ID" value="AT4G02560"/>
</dbReference>
<dbReference type="Gramene" id="AT4G02560.2">
    <property type="protein sequence ID" value="AT4G02560.2"/>
    <property type="gene ID" value="AT4G02560"/>
</dbReference>
<dbReference type="KEGG" id="ath:AT4G02560"/>
<dbReference type="Araport" id="AT4G02560"/>
<dbReference type="TAIR" id="AT4G02560">
    <property type="gene designation" value="LD"/>
</dbReference>
<dbReference type="eggNOG" id="ENOG502QSCV">
    <property type="taxonomic scope" value="Eukaryota"/>
</dbReference>
<dbReference type="HOGENOM" id="CLU_008897_0_0_1"/>
<dbReference type="InParanoid" id="Q38796"/>
<dbReference type="OMA" id="PKEPWDV"/>
<dbReference type="PhylomeDB" id="Q38796"/>
<dbReference type="PRO" id="PR:Q38796"/>
<dbReference type="Proteomes" id="UP000006548">
    <property type="component" value="Chromosome 4"/>
</dbReference>
<dbReference type="ExpressionAtlas" id="Q38796">
    <property type="expression patterns" value="baseline and differential"/>
</dbReference>
<dbReference type="GO" id="GO:0005634">
    <property type="term" value="C:nucleus"/>
    <property type="evidence" value="ECO:0000314"/>
    <property type="project" value="TAIR"/>
</dbReference>
<dbReference type="GO" id="GO:0003677">
    <property type="term" value="F:DNA binding"/>
    <property type="evidence" value="ECO:0007669"/>
    <property type="project" value="UniProtKB-KW"/>
</dbReference>
<dbReference type="GO" id="GO:0003700">
    <property type="term" value="F:DNA-binding transcription factor activity"/>
    <property type="evidence" value="ECO:0000304"/>
    <property type="project" value="TAIR"/>
</dbReference>
<dbReference type="GO" id="GO:0030154">
    <property type="term" value="P:cell differentiation"/>
    <property type="evidence" value="ECO:0007669"/>
    <property type="project" value="UniProtKB-KW"/>
</dbReference>
<dbReference type="GO" id="GO:0009908">
    <property type="term" value="P:flower development"/>
    <property type="evidence" value="ECO:0007669"/>
    <property type="project" value="UniProtKB-KW"/>
</dbReference>
<dbReference type="GO" id="GO:0010228">
    <property type="term" value="P:vegetative to reproductive phase transition of meristem"/>
    <property type="evidence" value="ECO:0000315"/>
    <property type="project" value="TAIR"/>
</dbReference>
<dbReference type="InterPro" id="IPR001356">
    <property type="entry name" value="HD"/>
</dbReference>
<dbReference type="InterPro" id="IPR009057">
    <property type="entry name" value="Homeodomain-like_sf"/>
</dbReference>
<dbReference type="InterPro" id="IPR035441">
    <property type="entry name" value="TFIIS/LEDGF_dom_sf"/>
</dbReference>
<dbReference type="PANTHER" id="PTHR33400:SF6">
    <property type="entry name" value="HOMEOBOX PROTEIN LUMINIDEPENDENS"/>
    <property type="match status" value="1"/>
</dbReference>
<dbReference type="PANTHER" id="PTHR33400">
    <property type="entry name" value="ZINC FINGER CCCH DOMAIN-CONTAINING PROTEIN 6-RELATED"/>
    <property type="match status" value="1"/>
</dbReference>
<dbReference type="SMART" id="SM00389">
    <property type="entry name" value="HOX"/>
    <property type="match status" value="1"/>
</dbReference>
<dbReference type="SUPFAM" id="SSF47676">
    <property type="entry name" value="Conserved domain common to transcription factors TFIIS, elongin A, CRSP70"/>
    <property type="match status" value="1"/>
</dbReference>
<dbReference type="SUPFAM" id="SSF46689">
    <property type="entry name" value="Homeodomain-like"/>
    <property type="match status" value="1"/>
</dbReference>
<dbReference type="PROSITE" id="PS50071">
    <property type="entry name" value="HOMEOBOX_2"/>
    <property type="match status" value="1"/>
</dbReference>